<proteinExistence type="evidence at protein level"/>
<protein>
    <recommendedName>
        <fullName evidence="4">Nicotinamidase/pyrazinamidase</fullName>
    </recommendedName>
    <alternativeName>
        <fullName evidence="4">Nicotinamidase</fullName>
        <ecNumber evidence="2">3.5.1.19</ecNumber>
    </alternativeName>
    <alternativeName>
        <fullName evidence="1">Nicotinamide deamidase</fullName>
        <shortName evidence="1">NAMase</shortName>
    </alternativeName>
    <alternativeName>
        <fullName evidence="4 5">Pyrazinamidase</fullName>
        <shortName evidence="1">PZAase</shortName>
        <ecNumber evidence="2">3.5.1.-</ecNumber>
    </alternativeName>
</protein>
<feature type="chain" id="PRO_0000438715" description="Nicotinamidase/pyrazinamidase">
    <location>
        <begin position="1"/>
        <end position="186"/>
    </location>
</feature>
<feature type="active site" description="Proton acceptor" evidence="7">
    <location>
        <position position="8"/>
    </location>
</feature>
<feature type="active site" evidence="7">
    <location>
        <position position="96"/>
    </location>
</feature>
<feature type="active site" description="Nucleophile" evidence="7">
    <location>
        <position position="138"/>
    </location>
</feature>
<feature type="binding site" evidence="3 9">
    <location>
        <position position="49"/>
    </location>
    <ligand>
        <name>Fe cation</name>
        <dbReference type="ChEBI" id="CHEBI:24875"/>
    </ligand>
</feature>
<feature type="binding site" evidence="3 9">
    <location>
        <position position="51"/>
    </location>
    <ligand>
        <name>Fe cation</name>
        <dbReference type="ChEBI" id="CHEBI:24875"/>
    </ligand>
</feature>
<feature type="binding site" evidence="3 9">
    <location>
        <position position="57"/>
    </location>
    <ligand>
        <name>Fe cation</name>
        <dbReference type="ChEBI" id="CHEBI:24875"/>
    </ligand>
</feature>
<feature type="binding site" evidence="3 9">
    <location>
        <position position="71"/>
    </location>
    <ligand>
        <name>Fe cation</name>
        <dbReference type="ChEBI" id="CHEBI:24875"/>
    </ligand>
</feature>
<feature type="mutagenesis site" description="Loss of enzymatic activity. No effect on metal ion content." evidence="2">
    <original>D</original>
    <variation>A</variation>
    <location>
        <position position="8"/>
    </location>
</feature>
<feature type="mutagenesis site" description="3000-fold decrease in enzymatic activity with NAM as substrate, and 410-fold decrease in enzymatic activity with PZA as substrate. The mutant has no detectable iron and manganese." evidence="2">
    <original>D</original>
    <variation>A</variation>
    <location>
        <position position="49"/>
    </location>
</feature>
<feature type="mutagenesis site" description="10-fold decrease in enzymatic activity with NAM as substrate, and 21-fold decrease in enzymatic activity with PZA as substrate. The mutant has a low metal ion content." evidence="2">
    <original>H</original>
    <variation>A</variation>
    <location>
        <position position="51"/>
    </location>
</feature>
<feature type="mutagenesis site" description="112-fold decrease in enzymatic activity with NAM as substrate, and 164-fold decrease in enzymatic activity with PZA as substrate. The mutant has no detectable iron and manganese." evidence="2">
    <original>H</original>
    <variation>A</variation>
    <location>
        <position position="57"/>
    </location>
</feature>
<feature type="mutagenesis site" description="2.4-fold decrease in enzymatic activity with NAM or PZA as substrate. No effect on metal ion content." evidence="2">
    <original>S</original>
    <variation>A</variation>
    <location>
        <position position="59"/>
    </location>
</feature>
<feature type="mutagenesis site" description="100-fold decrease in enzymatic activity with NAM or PZA as substrate. The mutant has a low metal ion content." evidence="2">
    <original>H</original>
    <variation>A</variation>
    <location>
        <position position="71"/>
    </location>
</feature>
<feature type="mutagenesis site" description="Loss of enzymatic activity. No effect on metal ion content." evidence="2">
    <original>K</original>
    <variation>A</variation>
    <location>
        <position position="96"/>
    </location>
</feature>
<feature type="mutagenesis site" description="5-fold decrease in enzymatic activity with NAM as substrate, and 3-fold decrease in enzymatic activity with PZA as substrate. No effect on metal ion content." evidence="2">
    <original>S</original>
    <variation>A</variation>
    <location>
        <position position="104"/>
    </location>
</feature>
<feature type="mutagenesis site" description="Loss of enzymatic activity. No effect on metal ion content." evidence="2">
    <original>C</original>
    <variation>A</variation>
    <location>
        <position position="138"/>
    </location>
</feature>
<feature type="strand" evidence="10">
    <location>
        <begin position="2"/>
        <end position="7"/>
    </location>
</feature>
<feature type="helix" evidence="10">
    <location>
        <begin position="11"/>
        <end position="13"/>
    </location>
</feature>
<feature type="helix" evidence="10">
    <location>
        <begin position="24"/>
        <end position="31"/>
    </location>
</feature>
<feature type="turn" evidence="10">
    <location>
        <begin position="32"/>
        <end position="36"/>
    </location>
</feature>
<feature type="strand" evidence="10">
    <location>
        <begin position="42"/>
        <end position="49"/>
    </location>
</feature>
<feature type="helix" evidence="10">
    <location>
        <begin position="55"/>
        <end position="57"/>
    </location>
</feature>
<feature type="strand" evidence="10">
    <location>
        <begin position="64"/>
        <end position="66"/>
    </location>
</feature>
<feature type="helix" evidence="10">
    <location>
        <begin position="77"/>
        <end position="79"/>
    </location>
</feature>
<feature type="strand" evidence="10">
    <location>
        <begin position="83"/>
        <end position="85"/>
    </location>
</feature>
<feature type="strand" evidence="10">
    <location>
        <begin position="92"/>
        <end position="96"/>
    </location>
</feature>
<feature type="strand" evidence="10">
    <location>
        <begin position="98"/>
        <end position="100"/>
    </location>
</feature>
<feature type="helix" evidence="10">
    <location>
        <begin position="105"/>
        <end position="107"/>
    </location>
</feature>
<feature type="strand" evidence="10">
    <location>
        <begin position="111"/>
        <end position="113"/>
    </location>
</feature>
<feature type="helix" evidence="10">
    <location>
        <begin position="116"/>
        <end position="121"/>
    </location>
</feature>
<feature type="turn" evidence="10">
    <location>
        <begin position="122"/>
        <end position="124"/>
    </location>
</feature>
<feature type="strand" evidence="10">
    <location>
        <begin position="127"/>
        <end position="133"/>
    </location>
</feature>
<feature type="turn" evidence="10">
    <location>
        <begin position="135"/>
        <end position="137"/>
    </location>
</feature>
<feature type="helix" evidence="10">
    <location>
        <begin position="138"/>
        <end position="148"/>
    </location>
</feature>
<feature type="strand" evidence="10">
    <location>
        <begin position="152"/>
        <end position="161"/>
    </location>
</feature>
<feature type="helix" evidence="10">
    <location>
        <begin position="165"/>
        <end position="177"/>
    </location>
</feature>
<feature type="strand" evidence="10">
    <location>
        <begin position="181"/>
        <end position="183"/>
    </location>
</feature>
<keyword id="KW-0002">3D-structure</keyword>
<keyword id="KW-0046">Antibiotic resistance</keyword>
<keyword id="KW-0378">Hydrolase</keyword>
<keyword id="KW-0408">Iron</keyword>
<keyword id="KW-0464">Manganese</keyword>
<keyword id="KW-0479">Metal-binding</keyword>
<keyword id="KW-0662">Pyridine nucleotide biosynthesis</keyword>
<keyword id="KW-1185">Reference proteome</keyword>
<evidence type="ECO:0000250" key="1">
    <source>
        <dbReference type="UniProtKB" id="P21369"/>
    </source>
</evidence>
<evidence type="ECO:0000269" key="2">
    <source>
    </source>
</evidence>
<evidence type="ECO:0000269" key="3">
    <source>
    </source>
</evidence>
<evidence type="ECO:0000303" key="4">
    <source>
    </source>
</evidence>
<evidence type="ECO:0000303" key="5">
    <source>
    </source>
</evidence>
<evidence type="ECO:0000305" key="6"/>
<evidence type="ECO:0000305" key="7">
    <source>
    </source>
</evidence>
<evidence type="ECO:0000312" key="8">
    <source>
        <dbReference type="EMBL" id="CCP44816.1"/>
    </source>
</evidence>
<evidence type="ECO:0007744" key="9">
    <source>
        <dbReference type="PDB" id="3PL1"/>
    </source>
</evidence>
<evidence type="ECO:0007829" key="10">
    <source>
        <dbReference type="PDB" id="3PL1"/>
    </source>
</evidence>
<reference key="1">
    <citation type="journal article" date="1998" name="Nature">
        <title>Deciphering the biology of Mycobacterium tuberculosis from the complete genome sequence.</title>
        <authorList>
            <person name="Cole S.T."/>
            <person name="Brosch R."/>
            <person name="Parkhill J."/>
            <person name="Garnier T."/>
            <person name="Churcher C.M."/>
            <person name="Harris D.E."/>
            <person name="Gordon S.V."/>
            <person name="Eiglmeier K."/>
            <person name="Gas S."/>
            <person name="Barry C.E. III"/>
            <person name="Tekaia F."/>
            <person name="Badcock K."/>
            <person name="Basham D."/>
            <person name="Brown D."/>
            <person name="Chillingworth T."/>
            <person name="Connor R."/>
            <person name="Davies R.M."/>
            <person name="Devlin K."/>
            <person name="Feltwell T."/>
            <person name="Gentles S."/>
            <person name="Hamlin N."/>
            <person name="Holroyd S."/>
            <person name="Hornsby T."/>
            <person name="Jagels K."/>
            <person name="Krogh A."/>
            <person name="McLean J."/>
            <person name="Moule S."/>
            <person name="Murphy L.D."/>
            <person name="Oliver S."/>
            <person name="Osborne J."/>
            <person name="Quail M.A."/>
            <person name="Rajandream M.A."/>
            <person name="Rogers J."/>
            <person name="Rutter S."/>
            <person name="Seeger K."/>
            <person name="Skelton S."/>
            <person name="Squares S."/>
            <person name="Squares R."/>
            <person name="Sulston J.E."/>
            <person name="Taylor K."/>
            <person name="Whitehead S."/>
            <person name="Barrell B.G."/>
        </authorList>
    </citation>
    <scope>NUCLEOTIDE SEQUENCE [LARGE SCALE GENOMIC DNA]</scope>
    <source>
        <strain>ATCC 25618 / H37Rv</strain>
    </source>
</reference>
<reference key="2">
    <citation type="journal article" date="2008" name="FEBS J.">
        <title>Characterization of Mycobacterium tuberculosis nicotinamidase/pyrazinamidase.</title>
        <authorList>
            <person name="Zhang H."/>
            <person name="Deng J.Y."/>
            <person name="Bi L.J."/>
            <person name="Zhou Y.F."/>
            <person name="Zhang Z.P."/>
            <person name="Zhang C.G."/>
            <person name="Zhang Y."/>
            <person name="Zhang X.E."/>
        </authorList>
    </citation>
    <scope>FUNCTION</scope>
    <scope>CATALYTIC ACTIVITY</scope>
    <scope>BIOPHYSICOCHEMICAL PROPERTIES</scope>
    <scope>COFACTOR</scope>
    <scope>ACTIVITY REGULATION</scope>
    <scope>SUBUNIT</scope>
    <scope>MUTAGENESIS OF ASP-8; ASP-49; HIS-51; HIS-57; SER-59; HIS-71; LYS-96; SER-104 AND CYS-138</scope>
    <source>
        <strain>H37Rv</strain>
    </source>
</reference>
<reference key="3">
    <citation type="journal article" date="2011" name="Mol. Cell. Proteomics">
        <title>Proteogenomic analysis of Mycobacterium tuberculosis by high resolution mass spectrometry.</title>
        <authorList>
            <person name="Kelkar D.S."/>
            <person name="Kumar D."/>
            <person name="Kumar P."/>
            <person name="Balakrishnan L."/>
            <person name="Muthusamy B."/>
            <person name="Yadav A.K."/>
            <person name="Shrivastava P."/>
            <person name="Marimuthu A."/>
            <person name="Anand S."/>
            <person name="Sundaram H."/>
            <person name="Kingsbury R."/>
            <person name="Harsha H.C."/>
            <person name="Nair B."/>
            <person name="Prasad T.S."/>
            <person name="Chauhan D.S."/>
            <person name="Katoch K."/>
            <person name="Katoch V.M."/>
            <person name="Kumar P."/>
            <person name="Chaerkady R."/>
            <person name="Ramachandran S."/>
            <person name="Dash D."/>
            <person name="Pandey A."/>
        </authorList>
    </citation>
    <scope>IDENTIFICATION BY MASS SPECTROMETRY [LARGE SCALE ANALYSIS]</scope>
    <source>
        <strain>ATCC 25618 / H37Rv</strain>
    </source>
</reference>
<reference key="4">
    <citation type="journal article" date="2011" name="PLoS ONE">
        <title>Crystal structure of the pyrazinamidase of Mycobacterium tuberculosis: insights into natural and acquired resistance to pyrazinamide.</title>
        <authorList>
            <person name="Petrella S."/>
            <person name="Gelus-Ziental N."/>
            <person name="Maudry A."/>
            <person name="Laurans C."/>
            <person name="Boudjelloul R."/>
            <person name="Sougakoff W."/>
        </authorList>
    </citation>
    <scope>X-RAY CRYSTALLOGRAPHY (2.20 ANGSTROMS) IN COMPLEX WITH IRON</scope>
    <scope>COFACTOR</scope>
    <scope>REACTION MECHANISM</scope>
    <scope>ACTIVE SITE</scope>
    <source>
        <strain>H37Rv</strain>
    </source>
</reference>
<gene>
    <name evidence="4 8" type="primary">pncA</name>
    <name evidence="8" type="ordered locus">Rv2043c</name>
</gene>
<comment type="function">
    <text evidence="1 2">Catalyzes the deamidation of nicotinamide (NAM) into nicotinate (PubMed:18201201). Likely functions in the cyclical salvage pathway for production of NAD from nicotinamide (By similarity).</text>
</comment>
<comment type="function">
    <text evidence="2">Is involved in the activation of the first-line antituberculous drug pyrazinamide (PZA) by converting it into the active form, pyrazinoic acid.</text>
</comment>
<comment type="catalytic activity">
    <reaction evidence="2">
        <text>nicotinamide + H2O = nicotinate + NH4(+)</text>
        <dbReference type="Rhea" id="RHEA:14545"/>
        <dbReference type="ChEBI" id="CHEBI:15377"/>
        <dbReference type="ChEBI" id="CHEBI:17154"/>
        <dbReference type="ChEBI" id="CHEBI:28938"/>
        <dbReference type="ChEBI" id="CHEBI:32544"/>
        <dbReference type="EC" id="3.5.1.19"/>
    </reaction>
</comment>
<comment type="catalytic activity">
    <reaction evidence="2">
        <text>pyrazinamide + H2O = pyrazine-2-carboxylate + NH4(+)</text>
        <dbReference type="Rhea" id="RHEA:35063"/>
        <dbReference type="ChEBI" id="CHEBI:15377"/>
        <dbReference type="ChEBI" id="CHEBI:28938"/>
        <dbReference type="ChEBI" id="CHEBI:45285"/>
        <dbReference type="ChEBI" id="CHEBI:71266"/>
    </reaction>
</comment>
<comment type="cofactor">
    <cofactor evidence="2">
        <name>Mn(2+)</name>
        <dbReference type="ChEBI" id="CHEBI:29035"/>
    </cofactor>
    <cofactor evidence="2 3">
        <name>Fe(2+)</name>
        <dbReference type="ChEBI" id="CHEBI:29033"/>
    </cofactor>
    <text evidence="2">PncA contains Mn(2+) and Fe(2+) in a molecular ratio of 1:1. PncA has only one metal center. It is believed that PncA binds iron in the natural state, although both metals can support enzymatic activity.</text>
</comment>
<comment type="activity regulation">
    <text evidence="2">Is inhibited by Cu(2+), Zn(2+) and Fe(3+).</text>
</comment>
<comment type="biophysicochemical properties">
    <phDependence>
        <text evidence="2">Optimum pH is 7.0 for the hydrolysis of nicotinamide. The enzyme activity decreases rapidly below pH 6.0 or above pH 8.0.</text>
    </phDependence>
    <temperatureDependence>
        <text evidence="2">Optimum temperature is 40 degrees Celsius for the hydrolysis of nicotinamide. Below 25 or above 70 degrees Celsius, the enzyme loses its activity rapidly.</text>
    </temperatureDependence>
</comment>
<comment type="pathway">
    <text evidence="1">Cofactor biosynthesis; nicotinate biosynthesis; nicotinate from nicotinamide: step 1/1.</text>
</comment>
<comment type="subunit">
    <text evidence="2">Monomer.</text>
</comment>
<comment type="miscellaneous">
    <text evidence="6">Most pyrazinamide-resistant clinical M.tuberculosis isolates contain mutations in the pncA gene, causing lack or reduction of PZAase activity.</text>
</comment>
<comment type="similarity">
    <text evidence="6">Belongs to the isochorismatase family.</text>
</comment>
<name>PNCA_MYCTU</name>
<organism>
    <name type="scientific">Mycobacterium tuberculosis (strain ATCC 25618 / H37Rv)</name>
    <dbReference type="NCBI Taxonomy" id="83332"/>
    <lineage>
        <taxon>Bacteria</taxon>
        <taxon>Bacillati</taxon>
        <taxon>Actinomycetota</taxon>
        <taxon>Actinomycetes</taxon>
        <taxon>Mycobacteriales</taxon>
        <taxon>Mycobacteriaceae</taxon>
        <taxon>Mycobacterium</taxon>
        <taxon>Mycobacterium tuberculosis complex</taxon>
    </lineage>
</organism>
<accession>I6XD65</accession>
<dbReference type="EC" id="3.5.1.19" evidence="2"/>
<dbReference type="EC" id="3.5.1.-" evidence="2"/>
<dbReference type="EMBL" id="AL123456">
    <property type="protein sequence ID" value="CCP44816.1"/>
    <property type="molecule type" value="Genomic_DNA"/>
</dbReference>
<dbReference type="RefSeq" id="NP_216559.1">
    <property type="nucleotide sequence ID" value="NC_000962.3"/>
</dbReference>
<dbReference type="RefSeq" id="WP_003410243.1">
    <property type="nucleotide sequence ID" value="NZ_NVQJ01000046.1"/>
</dbReference>
<dbReference type="PDB" id="3PL1">
    <property type="method" value="X-ray"/>
    <property type="resolution" value="2.20 A"/>
    <property type="chains" value="A=1-186"/>
</dbReference>
<dbReference type="PDBsum" id="3PL1"/>
<dbReference type="SMR" id="I6XD65"/>
<dbReference type="FunCoup" id="I6XD65">
    <property type="interactions" value="299"/>
</dbReference>
<dbReference type="STRING" id="83332.Rv2043c"/>
<dbReference type="PaxDb" id="83332-Rv2043c"/>
<dbReference type="DNASU" id="888260"/>
<dbReference type="GeneID" id="45426023"/>
<dbReference type="GeneID" id="888260"/>
<dbReference type="KEGG" id="mtu:Rv2043c"/>
<dbReference type="KEGG" id="mtv:RVBD_2043c"/>
<dbReference type="PATRIC" id="fig|83332.111.peg.2278"/>
<dbReference type="TubercuList" id="Rv2043c"/>
<dbReference type="eggNOG" id="COG1335">
    <property type="taxonomic scope" value="Bacteria"/>
</dbReference>
<dbReference type="HOGENOM" id="CLU_068979_13_2_11"/>
<dbReference type="InParanoid" id="I6XD65"/>
<dbReference type="OrthoDB" id="9791276at2"/>
<dbReference type="PhylomeDB" id="I6XD65"/>
<dbReference type="BRENDA" id="3.5.1.19">
    <property type="organism ID" value="3445"/>
</dbReference>
<dbReference type="BRENDA" id="3.5.1.B15">
    <property type="organism ID" value="3445"/>
</dbReference>
<dbReference type="UniPathway" id="UPA00830">
    <property type="reaction ID" value="UER00790"/>
</dbReference>
<dbReference type="EvolutionaryTrace" id="I6XD65"/>
<dbReference type="Proteomes" id="UP000001584">
    <property type="component" value="Chromosome"/>
</dbReference>
<dbReference type="GO" id="GO:0008198">
    <property type="term" value="F:ferrous iron binding"/>
    <property type="evidence" value="ECO:0000314"/>
    <property type="project" value="UniProtKB"/>
</dbReference>
<dbReference type="GO" id="GO:0030145">
    <property type="term" value="F:manganese ion binding"/>
    <property type="evidence" value="ECO:0000314"/>
    <property type="project" value="UniProtKB"/>
</dbReference>
<dbReference type="GO" id="GO:0008936">
    <property type="term" value="F:nicotinamidase activity"/>
    <property type="evidence" value="ECO:0000314"/>
    <property type="project" value="UniProtKB"/>
</dbReference>
<dbReference type="GO" id="GO:0006769">
    <property type="term" value="P:nicotinamide metabolic process"/>
    <property type="evidence" value="ECO:0000314"/>
    <property type="project" value="UniProtKB"/>
</dbReference>
<dbReference type="GO" id="GO:0019363">
    <property type="term" value="P:pyridine nucleotide biosynthetic process"/>
    <property type="evidence" value="ECO:0007669"/>
    <property type="project" value="UniProtKB-KW"/>
</dbReference>
<dbReference type="GO" id="GO:0046677">
    <property type="term" value="P:response to antibiotic"/>
    <property type="evidence" value="ECO:0007669"/>
    <property type="project" value="UniProtKB-KW"/>
</dbReference>
<dbReference type="GO" id="GO:0006805">
    <property type="term" value="P:xenobiotic metabolic process"/>
    <property type="evidence" value="ECO:0000314"/>
    <property type="project" value="UniProtKB"/>
</dbReference>
<dbReference type="CDD" id="cd01011">
    <property type="entry name" value="nicotinamidase"/>
    <property type="match status" value="1"/>
</dbReference>
<dbReference type="FunFam" id="3.40.50.850:FF:000011">
    <property type="entry name" value="Pyrazinamidase/nicotinamidase PncA"/>
    <property type="match status" value="1"/>
</dbReference>
<dbReference type="Gene3D" id="3.40.50.850">
    <property type="entry name" value="Isochorismatase-like"/>
    <property type="match status" value="1"/>
</dbReference>
<dbReference type="InterPro" id="IPR000868">
    <property type="entry name" value="Isochorismatase-like_dom"/>
</dbReference>
<dbReference type="InterPro" id="IPR036380">
    <property type="entry name" value="Isochorismatase-like_sf"/>
</dbReference>
<dbReference type="InterPro" id="IPR052347">
    <property type="entry name" value="Isochorismatase_Nicotinamidase"/>
</dbReference>
<dbReference type="PANTHER" id="PTHR11080:SF2">
    <property type="entry name" value="LD05707P"/>
    <property type="match status" value="1"/>
</dbReference>
<dbReference type="PANTHER" id="PTHR11080">
    <property type="entry name" value="PYRAZINAMIDASE/NICOTINAMIDASE"/>
    <property type="match status" value="1"/>
</dbReference>
<dbReference type="Pfam" id="PF00857">
    <property type="entry name" value="Isochorismatase"/>
    <property type="match status" value="1"/>
</dbReference>
<dbReference type="SUPFAM" id="SSF52499">
    <property type="entry name" value="Isochorismatase-like hydrolases"/>
    <property type="match status" value="1"/>
</dbReference>
<sequence length="186" mass="19605">MRALIIVDVQNDFCEGGSLAVTGGAALARAISDYLAEAADYHHVVATKDFHIDPGDHFSGTPDYSSSWPPHCVSGTPGADFHPSLDTSAIEAVFYKGAYTGAYSGFEGVDENGTPLLNWLRQRGVDEVDVVGIATDHCVRQTAEDAVRNGLATRVLVDLTAGVSADTTVAALEEMRTASVELVCSS</sequence>